<dbReference type="EC" id="3.5.1.5" evidence="1"/>
<dbReference type="EMBL" id="AE001825">
    <property type="protein sequence ID" value="AAF12460.1"/>
    <property type="molecule type" value="Genomic_DNA"/>
</dbReference>
<dbReference type="PIR" id="D75586">
    <property type="entry name" value="D75586"/>
</dbReference>
<dbReference type="RefSeq" id="NP_285642.1">
    <property type="nucleotide sequence ID" value="NC_001264.1"/>
</dbReference>
<dbReference type="RefSeq" id="WP_010889578.1">
    <property type="nucleotide sequence ID" value="NC_001264.1"/>
</dbReference>
<dbReference type="SMR" id="Q9RYJ3"/>
<dbReference type="FunCoup" id="Q9RYJ3">
    <property type="interactions" value="71"/>
</dbReference>
<dbReference type="STRING" id="243230.DR_A0319"/>
<dbReference type="PaxDb" id="243230-DR_A0319"/>
<dbReference type="EnsemblBacteria" id="AAF12460">
    <property type="protein sequence ID" value="AAF12460"/>
    <property type="gene ID" value="DR_A0319"/>
</dbReference>
<dbReference type="GeneID" id="69519203"/>
<dbReference type="KEGG" id="dra:DR_A0319"/>
<dbReference type="PATRIC" id="fig|243230.17.peg.3209"/>
<dbReference type="eggNOG" id="COG0831">
    <property type="taxonomic scope" value="Bacteria"/>
</dbReference>
<dbReference type="eggNOG" id="COG0832">
    <property type="taxonomic scope" value="Bacteria"/>
</dbReference>
<dbReference type="HOGENOM" id="CLU_000980_3_0_0"/>
<dbReference type="InParanoid" id="Q9RYJ3"/>
<dbReference type="OrthoDB" id="9793527at2"/>
<dbReference type="UniPathway" id="UPA00258">
    <property type="reaction ID" value="UER00370"/>
</dbReference>
<dbReference type="Proteomes" id="UP000002524">
    <property type="component" value="Chromosome 2"/>
</dbReference>
<dbReference type="GO" id="GO:0035550">
    <property type="term" value="C:urease complex"/>
    <property type="evidence" value="ECO:0007669"/>
    <property type="project" value="InterPro"/>
</dbReference>
<dbReference type="GO" id="GO:0016151">
    <property type="term" value="F:nickel cation binding"/>
    <property type="evidence" value="ECO:0007669"/>
    <property type="project" value="InterPro"/>
</dbReference>
<dbReference type="GO" id="GO:0009039">
    <property type="term" value="F:urease activity"/>
    <property type="evidence" value="ECO:0000318"/>
    <property type="project" value="GO_Central"/>
</dbReference>
<dbReference type="GO" id="GO:0043419">
    <property type="term" value="P:urea catabolic process"/>
    <property type="evidence" value="ECO:0000318"/>
    <property type="project" value="GO_Central"/>
</dbReference>
<dbReference type="CDD" id="cd00407">
    <property type="entry name" value="Urease_beta"/>
    <property type="match status" value="1"/>
</dbReference>
<dbReference type="CDD" id="cd00390">
    <property type="entry name" value="Urease_gamma"/>
    <property type="match status" value="1"/>
</dbReference>
<dbReference type="FunFam" id="2.10.150.10:FF:000001">
    <property type="entry name" value="Urease subunit beta"/>
    <property type="match status" value="1"/>
</dbReference>
<dbReference type="Gene3D" id="2.10.150.10">
    <property type="entry name" value="Urease, beta subunit"/>
    <property type="match status" value="1"/>
</dbReference>
<dbReference type="Gene3D" id="3.30.280.10">
    <property type="entry name" value="Urease, gamma-like subunit"/>
    <property type="match status" value="1"/>
</dbReference>
<dbReference type="HAMAP" id="MF_01954">
    <property type="entry name" value="Urease_beta"/>
    <property type="match status" value="1"/>
</dbReference>
<dbReference type="HAMAP" id="MF_01955">
    <property type="entry name" value="Urease_beta_gamma"/>
    <property type="match status" value="1"/>
</dbReference>
<dbReference type="HAMAP" id="MF_00739">
    <property type="entry name" value="Urease_gamma"/>
    <property type="match status" value="1"/>
</dbReference>
<dbReference type="InterPro" id="IPR002019">
    <property type="entry name" value="Urease_beta-like"/>
</dbReference>
<dbReference type="InterPro" id="IPR036461">
    <property type="entry name" value="Urease_betasu_sf"/>
</dbReference>
<dbReference type="InterPro" id="IPR012010">
    <property type="entry name" value="Urease_gamma"/>
</dbReference>
<dbReference type="InterPro" id="IPR008223">
    <property type="entry name" value="Urease_gamma-beta_su"/>
</dbReference>
<dbReference type="InterPro" id="IPR002026">
    <property type="entry name" value="Urease_gamma/gamma-beta_su"/>
</dbReference>
<dbReference type="InterPro" id="IPR036463">
    <property type="entry name" value="Urease_gamma_sf"/>
</dbReference>
<dbReference type="InterPro" id="IPR050069">
    <property type="entry name" value="Urease_subunit"/>
</dbReference>
<dbReference type="NCBIfam" id="NF009671">
    <property type="entry name" value="PRK13192.1"/>
    <property type="match status" value="1"/>
</dbReference>
<dbReference type="NCBIfam" id="NF009682">
    <property type="entry name" value="PRK13203.1"/>
    <property type="match status" value="1"/>
</dbReference>
<dbReference type="NCBIfam" id="NF009712">
    <property type="entry name" value="PRK13241.1"/>
    <property type="match status" value="1"/>
</dbReference>
<dbReference type="NCBIfam" id="TIGR00192">
    <property type="entry name" value="urease_beta"/>
    <property type="match status" value="1"/>
</dbReference>
<dbReference type="NCBIfam" id="TIGR00193">
    <property type="entry name" value="urease_gam"/>
    <property type="match status" value="1"/>
</dbReference>
<dbReference type="PANTHER" id="PTHR33569">
    <property type="entry name" value="UREASE"/>
    <property type="match status" value="1"/>
</dbReference>
<dbReference type="PANTHER" id="PTHR33569:SF1">
    <property type="entry name" value="UREASE"/>
    <property type="match status" value="1"/>
</dbReference>
<dbReference type="Pfam" id="PF00699">
    <property type="entry name" value="Urease_beta"/>
    <property type="match status" value="1"/>
</dbReference>
<dbReference type="Pfam" id="PF00547">
    <property type="entry name" value="Urease_gamma"/>
    <property type="match status" value="1"/>
</dbReference>
<dbReference type="PIRSF" id="PIRSF001225">
    <property type="entry name" value="Urease_gammabeta"/>
    <property type="match status" value="1"/>
</dbReference>
<dbReference type="SUPFAM" id="SSF51278">
    <property type="entry name" value="Urease, beta-subunit"/>
    <property type="match status" value="1"/>
</dbReference>
<dbReference type="SUPFAM" id="SSF54111">
    <property type="entry name" value="Urease, gamma-subunit"/>
    <property type="match status" value="1"/>
</dbReference>
<protein>
    <recommendedName>
        <fullName evidence="1">Urease subunit gamma/beta</fullName>
        <ecNumber evidence="1">3.5.1.5</ecNumber>
    </recommendedName>
    <alternativeName>
        <fullName evidence="1">Urea amidohydrolase subunit gamma/beta</fullName>
    </alternativeName>
</protein>
<evidence type="ECO:0000255" key="1">
    <source>
        <dbReference type="HAMAP-Rule" id="MF_01955"/>
    </source>
</evidence>
<proteinExistence type="inferred from homology"/>
<accession>Q9RYJ3</accession>
<gene>
    <name evidence="1" type="primary">ureAB</name>
    <name type="ordered locus">DR_A0319</name>
</gene>
<reference key="1">
    <citation type="journal article" date="1999" name="Science">
        <title>Genome sequence of the radioresistant bacterium Deinococcus radiodurans R1.</title>
        <authorList>
            <person name="White O."/>
            <person name="Eisen J.A."/>
            <person name="Heidelberg J.F."/>
            <person name="Hickey E.K."/>
            <person name="Peterson J.D."/>
            <person name="Dodson R.J."/>
            <person name="Haft D.H."/>
            <person name="Gwinn M.L."/>
            <person name="Nelson W.C."/>
            <person name="Richardson D.L."/>
            <person name="Moffat K.S."/>
            <person name="Qin H."/>
            <person name="Jiang L."/>
            <person name="Pamphile W."/>
            <person name="Crosby M."/>
            <person name="Shen M."/>
            <person name="Vamathevan J.J."/>
            <person name="Lam P."/>
            <person name="McDonald L.A."/>
            <person name="Utterback T.R."/>
            <person name="Zalewski C."/>
            <person name="Makarova K.S."/>
            <person name="Aravind L."/>
            <person name="Daly M.J."/>
            <person name="Minton K.W."/>
            <person name="Fleischmann R.D."/>
            <person name="Ketchum K.A."/>
            <person name="Nelson K.E."/>
            <person name="Salzberg S.L."/>
            <person name="Smith H.O."/>
            <person name="Venter J.C."/>
            <person name="Fraser C.M."/>
        </authorList>
    </citation>
    <scope>NUCLEOTIDE SEQUENCE [LARGE SCALE GENOMIC DNA]</scope>
    <source>
        <strain>ATCC 13939 / DSM 20539 / JCM 16871 / CCUG 27074 / LMG 4051 / NBRC 15346 / NCIMB 9279 / VKM B-1422 / R1</strain>
    </source>
</reference>
<keyword id="KW-0963">Cytoplasm</keyword>
<keyword id="KW-0378">Hydrolase</keyword>
<keyword id="KW-1185">Reference proteome</keyword>
<name>URE23_DEIRA</name>
<organism>
    <name type="scientific">Deinococcus radiodurans (strain ATCC 13939 / DSM 20539 / JCM 16871 / CCUG 27074 / LMG 4051 / NBRC 15346 / NCIMB 9279 / VKM B-1422 / R1)</name>
    <dbReference type="NCBI Taxonomy" id="243230"/>
    <lineage>
        <taxon>Bacteria</taxon>
        <taxon>Thermotogati</taxon>
        <taxon>Deinococcota</taxon>
        <taxon>Deinococci</taxon>
        <taxon>Deinococcales</taxon>
        <taxon>Deinococcaceae</taxon>
        <taxon>Deinococcus</taxon>
    </lineage>
</organism>
<feature type="chain" id="PRO_0000098076" description="Urease subunit gamma/beta">
    <location>
        <begin position="1"/>
        <end position="228"/>
    </location>
</feature>
<feature type="region of interest" description="Urease gamma">
    <location>
        <begin position="1"/>
        <end position="101"/>
    </location>
</feature>
<feature type="region of interest" description="Urease beta">
    <location>
        <begin position="102"/>
        <end position="228"/>
    </location>
</feature>
<comment type="catalytic activity">
    <reaction evidence="1">
        <text>urea + 2 H2O + H(+) = hydrogencarbonate + 2 NH4(+)</text>
        <dbReference type="Rhea" id="RHEA:20557"/>
        <dbReference type="ChEBI" id="CHEBI:15377"/>
        <dbReference type="ChEBI" id="CHEBI:15378"/>
        <dbReference type="ChEBI" id="CHEBI:16199"/>
        <dbReference type="ChEBI" id="CHEBI:17544"/>
        <dbReference type="ChEBI" id="CHEBI:28938"/>
        <dbReference type="EC" id="3.5.1.5"/>
    </reaction>
</comment>
<comment type="pathway">
    <text evidence="1">Nitrogen metabolism; urea degradation; CO(2) and NH(3) from urea (urease route): step 1/1.</text>
</comment>
<comment type="subunit">
    <text evidence="1">Heterohexamer of 3 UreC (alpha) and 3 UreAB (gamma/beta) subunits.</text>
</comment>
<comment type="subcellular location">
    <subcellularLocation>
        <location evidence="1">Cytoplasm</location>
    </subcellularLocation>
</comment>
<comment type="similarity">
    <text evidence="1">In the N-terminal section; belongs to the urease gamma subunit family.</text>
</comment>
<comment type="similarity">
    <text evidence="1">In the C-terminal section; belongs to the urease beta subunit family.</text>
</comment>
<sequence length="228" mass="24521">MQLTERERDKLLIFTAAQLARERRARGLKLNHPEAVALITAEVLEGIRDGRRVEDLMSFGAAILTPDDVLDGVPELIHEIQVEGTFPDGTKLVTVHDPIRGAASRRVAGEYLLEGGEIELNAGRPVTTLTVANTADRPVQVGSHFHFFEVNAGLRFDRAAAYGFRLNIPAGTAVRFEPGEEREVDLVPLGGSRTVYGMNALVNGDLDAPGTREAALEGARAAGFGGAQ</sequence>